<name>QUEA_STRP3</name>
<protein>
    <recommendedName>
        <fullName evidence="1">S-adenosylmethionine:tRNA ribosyltransferase-isomerase</fullName>
        <ecNumber evidence="1">2.4.99.17</ecNumber>
    </recommendedName>
    <alternativeName>
        <fullName evidence="1">Queuosine biosynthesis protein QueA</fullName>
    </alternativeName>
</protein>
<gene>
    <name evidence="1" type="primary">queA</name>
    <name type="ordered locus">SpyM3_1066</name>
</gene>
<comment type="function">
    <text evidence="1">Transfers and isomerizes the ribose moiety from AdoMet to the 7-aminomethyl group of 7-deazaguanine (preQ1-tRNA) to give epoxyqueuosine (oQ-tRNA).</text>
</comment>
<comment type="catalytic activity">
    <reaction evidence="1">
        <text>7-aminomethyl-7-carbaguanosine(34) in tRNA + S-adenosyl-L-methionine = epoxyqueuosine(34) in tRNA + adenine + L-methionine + 2 H(+)</text>
        <dbReference type="Rhea" id="RHEA:32155"/>
        <dbReference type="Rhea" id="RHEA-COMP:10342"/>
        <dbReference type="Rhea" id="RHEA-COMP:18582"/>
        <dbReference type="ChEBI" id="CHEBI:15378"/>
        <dbReference type="ChEBI" id="CHEBI:16708"/>
        <dbReference type="ChEBI" id="CHEBI:57844"/>
        <dbReference type="ChEBI" id="CHEBI:59789"/>
        <dbReference type="ChEBI" id="CHEBI:82833"/>
        <dbReference type="ChEBI" id="CHEBI:194443"/>
        <dbReference type="EC" id="2.4.99.17"/>
    </reaction>
</comment>
<comment type="pathway">
    <text evidence="1">tRNA modification; tRNA-queuosine biosynthesis.</text>
</comment>
<comment type="subunit">
    <text evidence="1">Monomer.</text>
</comment>
<comment type="subcellular location">
    <subcellularLocation>
        <location evidence="1">Cytoplasm</location>
    </subcellularLocation>
</comment>
<comment type="similarity">
    <text evidence="1">Belongs to the QueA family.</text>
</comment>
<organism>
    <name type="scientific">Streptococcus pyogenes serotype M3 (strain ATCC BAA-595 / MGAS315)</name>
    <dbReference type="NCBI Taxonomy" id="198466"/>
    <lineage>
        <taxon>Bacteria</taxon>
        <taxon>Bacillati</taxon>
        <taxon>Bacillota</taxon>
        <taxon>Bacilli</taxon>
        <taxon>Lactobacillales</taxon>
        <taxon>Streptococcaceae</taxon>
        <taxon>Streptococcus</taxon>
    </lineage>
</organism>
<keyword id="KW-0963">Cytoplasm</keyword>
<keyword id="KW-0671">Queuosine biosynthesis</keyword>
<keyword id="KW-0949">S-adenosyl-L-methionine</keyword>
<keyword id="KW-0808">Transferase</keyword>
<evidence type="ECO:0000255" key="1">
    <source>
        <dbReference type="HAMAP-Rule" id="MF_00113"/>
    </source>
</evidence>
<proteinExistence type="inferred from homology"/>
<sequence>MNTNDFDFELPEELIAQTPLEKRDSSKLLIIDHRQKTMVDSHFDHIIDQLNPGDALVMNNTRVLPARLYGEKPDTHGHVELLLLKNTQGDQWEVLAKPAKRLKVGSQVNFGDGHLKATIIDELEHGGRIVEFSYDGIFLEVLESLGEMPLPPYIHEKLEDAERYQTVYAKENGSAAAPTAGLHFTTDLLKKIEAKGVHLVYLTLHVGLGTFRPVSVDNLDEHDMHSEFYSLSEEAAQTLRDVKQAGGRVVAVGTTSIRTLETIGSKFQGDIQADSGWTNIFIKPGYQFKVVDAFSTNFHLPKSTLVMLVSAFAGRDFVLEAYRHAVDEKYRFFSFGDAMFVN</sequence>
<reference key="1">
    <citation type="journal article" date="2002" name="Proc. Natl. Acad. Sci. U.S.A.">
        <title>Genome sequence of a serotype M3 strain of group A Streptococcus: phage-encoded toxins, the high-virulence phenotype, and clone emergence.</title>
        <authorList>
            <person name="Beres S.B."/>
            <person name="Sylva G.L."/>
            <person name="Barbian K.D."/>
            <person name="Lei B."/>
            <person name="Hoff J.S."/>
            <person name="Mammarella N.D."/>
            <person name="Liu M.-Y."/>
            <person name="Smoot J.C."/>
            <person name="Porcella S.F."/>
            <person name="Parkins L.D."/>
            <person name="Campbell D.S."/>
            <person name="Smith T.M."/>
            <person name="McCormick J.K."/>
            <person name="Leung D.Y.M."/>
            <person name="Schlievert P.M."/>
            <person name="Musser J.M."/>
        </authorList>
    </citation>
    <scope>NUCLEOTIDE SEQUENCE [LARGE SCALE GENOMIC DNA]</scope>
    <source>
        <strain>ATCC BAA-595 / MGAS315</strain>
    </source>
</reference>
<dbReference type="EC" id="2.4.99.17" evidence="1"/>
<dbReference type="EMBL" id="AE014074">
    <property type="protein sequence ID" value="AAM79673.1"/>
    <property type="molecule type" value="Genomic_DNA"/>
</dbReference>
<dbReference type="RefSeq" id="WP_002995782.1">
    <property type="nucleotide sequence ID" value="NC_004070.1"/>
</dbReference>
<dbReference type="SMR" id="P0DD76"/>
<dbReference type="GeneID" id="69900641"/>
<dbReference type="KEGG" id="spg:SpyM3_1066"/>
<dbReference type="HOGENOM" id="CLU_039110_1_0_9"/>
<dbReference type="UniPathway" id="UPA00392"/>
<dbReference type="Proteomes" id="UP000000564">
    <property type="component" value="Chromosome"/>
</dbReference>
<dbReference type="GO" id="GO:0005737">
    <property type="term" value="C:cytoplasm"/>
    <property type="evidence" value="ECO:0007669"/>
    <property type="project" value="UniProtKB-SubCell"/>
</dbReference>
<dbReference type="GO" id="GO:0051075">
    <property type="term" value="F:S-adenosylmethionine:tRNA ribosyltransferase-isomerase activity"/>
    <property type="evidence" value="ECO:0007669"/>
    <property type="project" value="UniProtKB-EC"/>
</dbReference>
<dbReference type="GO" id="GO:0008616">
    <property type="term" value="P:queuosine biosynthetic process"/>
    <property type="evidence" value="ECO:0007669"/>
    <property type="project" value="UniProtKB-UniRule"/>
</dbReference>
<dbReference type="GO" id="GO:0002099">
    <property type="term" value="P:tRNA wobble guanine modification"/>
    <property type="evidence" value="ECO:0007669"/>
    <property type="project" value="TreeGrafter"/>
</dbReference>
<dbReference type="FunFam" id="2.40.10.240:FF:000002">
    <property type="entry name" value="S-adenosylmethionine:tRNA ribosyltransferase-isomerase"/>
    <property type="match status" value="1"/>
</dbReference>
<dbReference type="FunFam" id="3.40.1780.10:FF:000001">
    <property type="entry name" value="S-adenosylmethionine:tRNA ribosyltransferase-isomerase"/>
    <property type="match status" value="1"/>
</dbReference>
<dbReference type="Gene3D" id="2.40.10.240">
    <property type="entry name" value="QueA-like"/>
    <property type="match status" value="1"/>
</dbReference>
<dbReference type="Gene3D" id="3.40.1780.10">
    <property type="entry name" value="QueA-like"/>
    <property type="match status" value="1"/>
</dbReference>
<dbReference type="HAMAP" id="MF_00113">
    <property type="entry name" value="QueA"/>
    <property type="match status" value="1"/>
</dbReference>
<dbReference type="InterPro" id="IPR003699">
    <property type="entry name" value="QueA"/>
</dbReference>
<dbReference type="InterPro" id="IPR042118">
    <property type="entry name" value="QueA_dom1"/>
</dbReference>
<dbReference type="InterPro" id="IPR042119">
    <property type="entry name" value="QueA_dom2"/>
</dbReference>
<dbReference type="InterPro" id="IPR036100">
    <property type="entry name" value="QueA_sf"/>
</dbReference>
<dbReference type="NCBIfam" id="NF001140">
    <property type="entry name" value="PRK00147.1"/>
    <property type="match status" value="1"/>
</dbReference>
<dbReference type="NCBIfam" id="TIGR00113">
    <property type="entry name" value="queA"/>
    <property type="match status" value="1"/>
</dbReference>
<dbReference type="PANTHER" id="PTHR30307">
    <property type="entry name" value="S-ADENOSYLMETHIONINE:TRNA RIBOSYLTRANSFERASE-ISOMERASE"/>
    <property type="match status" value="1"/>
</dbReference>
<dbReference type="PANTHER" id="PTHR30307:SF0">
    <property type="entry name" value="S-ADENOSYLMETHIONINE:TRNA RIBOSYLTRANSFERASE-ISOMERASE"/>
    <property type="match status" value="1"/>
</dbReference>
<dbReference type="Pfam" id="PF02547">
    <property type="entry name" value="Queuosine_synth"/>
    <property type="match status" value="1"/>
</dbReference>
<dbReference type="SUPFAM" id="SSF111337">
    <property type="entry name" value="QueA-like"/>
    <property type="match status" value="1"/>
</dbReference>
<accession>P0DD76</accession>
<accession>Q8K6Z3</accession>
<feature type="chain" id="PRO_0000165452" description="S-adenosylmethionine:tRNA ribosyltransferase-isomerase">
    <location>
        <begin position="1"/>
        <end position="342"/>
    </location>
</feature>